<dbReference type="EC" id="3.6.1.7"/>
<dbReference type="EMBL" id="CP000267">
    <property type="protein sequence ID" value="ABD69186.1"/>
    <property type="molecule type" value="Genomic_DNA"/>
</dbReference>
<dbReference type="RefSeq" id="WP_011463754.1">
    <property type="nucleotide sequence ID" value="NC_007908.1"/>
</dbReference>
<dbReference type="SMR" id="Q21YG7"/>
<dbReference type="STRING" id="338969.Rfer_1453"/>
<dbReference type="KEGG" id="rfr:Rfer_1453"/>
<dbReference type="eggNOG" id="COG1254">
    <property type="taxonomic scope" value="Bacteria"/>
</dbReference>
<dbReference type="HOGENOM" id="CLU_141932_3_2_4"/>
<dbReference type="OrthoDB" id="5295388at2"/>
<dbReference type="Proteomes" id="UP000008332">
    <property type="component" value="Chromosome"/>
</dbReference>
<dbReference type="GO" id="GO:0003998">
    <property type="term" value="F:acylphosphatase activity"/>
    <property type="evidence" value="ECO:0007669"/>
    <property type="project" value="UniProtKB-EC"/>
</dbReference>
<dbReference type="Gene3D" id="3.30.70.100">
    <property type="match status" value="1"/>
</dbReference>
<dbReference type="InterPro" id="IPR020456">
    <property type="entry name" value="Acylphosphatase"/>
</dbReference>
<dbReference type="InterPro" id="IPR001792">
    <property type="entry name" value="Acylphosphatase-like_dom"/>
</dbReference>
<dbReference type="InterPro" id="IPR036046">
    <property type="entry name" value="Acylphosphatase-like_dom_sf"/>
</dbReference>
<dbReference type="InterPro" id="IPR017968">
    <property type="entry name" value="Acylphosphatase_CS"/>
</dbReference>
<dbReference type="PANTHER" id="PTHR47268">
    <property type="entry name" value="ACYLPHOSPHATASE"/>
    <property type="match status" value="1"/>
</dbReference>
<dbReference type="PANTHER" id="PTHR47268:SF4">
    <property type="entry name" value="ACYLPHOSPHATASE"/>
    <property type="match status" value="1"/>
</dbReference>
<dbReference type="Pfam" id="PF00708">
    <property type="entry name" value="Acylphosphatase"/>
    <property type="match status" value="1"/>
</dbReference>
<dbReference type="PRINTS" id="PR00112">
    <property type="entry name" value="ACYLPHPHTASE"/>
</dbReference>
<dbReference type="SUPFAM" id="SSF54975">
    <property type="entry name" value="Acylphosphatase/BLUF domain-like"/>
    <property type="match status" value="1"/>
</dbReference>
<dbReference type="PROSITE" id="PS00151">
    <property type="entry name" value="ACYLPHOSPHATASE_2"/>
    <property type="match status" value="1"/>
</dbReference>
<dbReference type="PROSITE" id="PS51160">
    <property type="entry name" value="ACYLPHOSPHATASE_3"/>
    <property type="match status" value="1"/>
</dbReference>
<comment type="catalytic activity">
    <reaction>
        <text>an acyl phosphate + H2O = a carboxylate + phosphate + H(+)</text>
        <dbReference type="Rhea" id="RHEA:14965"/>
        <dbReference type="ChEBI" id="CHEBI:15377"/>
        <dbReference type="ChEBI" id="CHEBI:15378"/>
        <dbReference type="ChEBI" id="CHEBI:29067"/>
        <dbReference type="ChEBI" id="CHEBI:43474"/>
        <dbReference type="ChEBI" id="CHEBI:59918"/>
        <dbReference type="EC" id="3.6.1.7"/>
    </reaction>
</comment>
<comment type="similarity">
    <text evidence="2">Belongs to the acylphosphatase family.</text>
</comment>
<gene>
    <name type="primary">acyP</name>
    <name type="ordered locus">Rfer_1453</name>
</gene>
<proteinExistence type="inferred from homology"/>
<reference key="1">
    <citation type="submission" date="2006-02" db="EMBL/GenBank/DDBJ databases">
        <title>Complete sequence of chromosome of Rhodoferax ferrireducens DSM 15236.</title>
        <authorList>
            <person name="Copeland A."/>
            <person name="Lucas S."/>
            <person name="Lapidus A."/>
            <person name="Barry K."/>
            <person name="Detter J.C."/>
            <person name="Glavina del Rio T."/>
            <person name="Hammon N."/>
            <person name="Israni S."/>
            <person name="Pitluck S."/>
            <person name="Brettin T."/>
            <person name="Bruce D."/>
            <person name="Han C."/>
            <person name="Tapia R."/>
            <person name="Gilna P."/>
            <person name="Kiss H."/>
            <person name="Schmutz J."/>
            <person name="Larimer F."/>
            <person name="Land M."/>
            <person name="Kyrpides N."/>
            <person name="Ivanova N."/>
            <person name="Richardson P."/>
        </authorList>
    </citation>
    <scope>NUCLEOTIDE SEQUENCE [LARGE SCALE GENOMIC DNA]</scope>
    <source>
        <strain>ATCC BAA-621 / DSM 15236 / T118</strain>
    </source>
</reference>
<feature type="chain" id="PRO_0000326784" description="Acylphosphatase">
    <location>
        <begin position="1"/>
        <end position="92"/>
    </location>
</feature>
<feature type="domain" description="Acylphosphatase-like" evidence="1">
    <location>
        <begin position="5"/>
        <end position="90"/>
    </location>
</feature>
<feature type="active site" evidence="1">
    <location>
        <position position="20"/>
    </location>
</feature>
<feature type="active site" evidence="1">
    <location>
        <position position="38"/>
    </location>
</feature>
<keyword id="KW-0378">Hydrolase</keyword>
<keyword id="KW-1185">Reference proteome</keyword>
<name>ACYP_ALBFT</name>
<accession>Q21YG7</accession>
<organism>
    <name type="scientific">Albidiferax ferrireducens (strain ATCC BAA-621 / DSM 15236 / T118)</name>
    <name type="common">Rhodoferax ferrireducens</name>
    <dbReference type="NCBI Taxonomy" id="338969"/>
    <lineage>
        <taxon>Bacteria</taxon>
        <taxon>Pseudomonadati</taxon>
        <taxon>Pseudomonadota</taxon>
        <taxon>Betaproteobacteria</taxon>
        <taxon>Burkholderiales</taxon>
        <taxon>Comamonadaceae</taxon>
        <taxon>Rhodoferax</taxon>
    </lineage>
</organism>
<sequence>MADVTYRLVICGLVQGVFYRGSMVSRANALGLRGWVRNRLDGSVEAVVQGEATEVNRMVEWARRGPSNAVVTSVNIFPSEGDFVGFQLREST</sequence>
<evidence type="ECO:0000255" key="1">
    <source>
        <dbReference type="PROSITE-ProRule" id="PRU00520"/>
    </source>
</evidence>
<evidence type="ECO:0000305" key="2"/>
<protein>
    <recommendedName>
        <fullName>Acylphosphatase</fullName>
        <ecNumber>3.6.1.7</ecNumber>
    </recommendedName>
    <alternativeName>
        <fullName>Acylphosphate phosphohydrolase</fullName>
    </alternativeName>
</protein>